<keyword id="KW-0010">Activator</keyword>
<keyword id="KW-0238">DNA-binding</keyword>
<keyword id="KW-0804">Transcription</keyword>
<keyword id="KW-0805">Transcription regulation</keyword>
<name>FIS_YERPN</name>
<feature type="chain" id="PRO_1000023353" description="DNA-binding protein Fis">
    <location>
        <begin position="1"/>
        <end position="98"/>
    </location>
</feature>
<feature type="DNA-binding region" description="H-T-H motif" evidence="1">
    <location>
        <begin position="74"/>
        <end position="93"/>
    </location>
</feature>
<organism>
    <name type="scientific">Yersinia pestis bv. Antiqua (strain Nepal516)</name>
    <dbReference type="NCBI Taxonomy" id="377628"/>
    <lineage>
        <taxon>Bacteria</taxon>
        <taxon>Pseudomonadati</taxon>
        <taxon>Pseudomonadota</taxon>
        <taxon>Gammaproteobacteria</taxon>
        <taxon>Enterobacterales</taxon>
        <taxon>Yersiniaceae</taxon>
        <taxon>Yersinia</taxon>
    </lineage>
</organism>
<evidence type="ECO:0000255" key="1">
    <source>
        <dbReference type="HAMAP-Rule" id="MF_00166"/>
    </source>
</evidence>
<protein>
    <recommendedName>
        <fullName evidence="1">DNA-binding protein Fis</fullName>
    </recommendedName>
</protein>
<accession>Q1CDT5</accession>
<accession>D1Q1J8</accession>
<sequence length="98" mass="11197">MFEQRVNSDVLTVATVNSQDQVTQKPLRDSVKQALKNYFAQLNGQDVSDLYELVLAEVEQPLLDMVMQYTRGNQTRAALMMGINRGTLRKKLKKYGMN</sequence>
<reference key="1">
    <citation type="journal article" date="2006" name="J. Bacteriol.">
        <title>Complete genome sequence of Yersinia pestis strains Antiqua and Nepal516: evidence of gene reduction in an emerging pathogen.</title>
        <authorList>
            <person name="Chain P.S.G."/>
            <person name="Hu P."/>
            <person name="Malfatti S.A."/>
            <person name="Radnedge L."/>
            <person name="Larimer F."/>
            <person name="Vergez L.M."/>
            <person name="Worsham P."/>
            <person name="Chu M.C."/>
            <person name="Andersen G.L."/>
        </authorList>
    </citation>
    <scope>NUCLEOTIDE SEQUENCE [LARGE SCALE GENOMIC DNA]</scope>
    <source>
        <strain>Nepal516</strain>
    </source>
</reference>
<reference key="2">
    <citation type="submission" date="2009-04" db="EMBL/GenBank/DDBJ databases">
        <title>Yersinia pestis Nepal516A whole genome shotgun sequencing project.</title>
        <authorList>
            <person name="Plunkett G. III"/>
            <person name="Anderson B.D."/>
            <person name="Baumler D.J."/>
            <person name="Burland V."/>
            <person name="Cabot E.L."/>
            <person name="Glasner J.D."/>
            <person name="Mau B."/>
            <person name="Neeno-Eckwall E."/>
            <person name="Perna N.T."/>
            <person name="Munk A.C."/>
            <person name="Tapia R."/>
            <person name="Green L.D."/>
            <person name="Rogers Y.C."/>
            <person name="Detter J.C."/>
            <person name="Bruce D.C."/>
            <person name="Brettin T.S."/>
        </authorList>
    </citation>
    <scope>NUCLEOTIDE SEQUENCE [LARGE SCALE GENOMIC DNA]</scope>
    <source>
        <strain>Nepal516</strain>
    </source>
</reference>
<gene>
    <name evidence="1" type="primary">fis</name>
    <name type="ordered locus">YPN_3518</name>
    <name type="ORF">YP516_3997</name>
</gene>
<comment type="function">
    <text evidence="1">Activates ribosomal RNA transcription. Plays a direct role in upstream activation of rRNA promoters.</text>
</comment>
<comment type="subunit">
    <text evidence="1">Homodimer.</text>
</comment>
<comment type="similarity">
    <text evidence="1">Belongs to the transcriptional regulatory Fis family.</text>
</comment>
<dbReference type="EMBL" id="CP000305">
    <property type="protein sequence ID" value="ABG19845.1"/>
    <property type="molecule type" value="Genomic_DNA"/>
</dbReference>
<dbReference type="EMBL" id="ACNQ01000019">
    <property type="protein sequence ID" value="EEO74401.1"/>
    <property type="molecule type" value="Genomic_DNA"/>
</dbReference>
<dbReference type="RefSeq" id="WP_002210061.1">
    <property type="nucleotide sequence ID" value="NZ_ACNQ01000019.1"/>
</dbReference>
<dbReference type="SMR" id="Q1CDT5"/>
<dbReference type="GeneID" id="97454355"/>
<dbReference type="KEGG" id="ypn:YPN_3518"/>
<dbReference type="HOGENOM" id="CLU_158040_3_0_6"/>
<dbReference type="Proteomes" id="UP000008936">
    <property type="component" value="Chromosome"/>
</dbReference>
<dbReference type="GO" id="GO:0003700">
    <property type="term" value="F:DNA-binding transcription factor activity"/>
    <property type="evidence" value="ECO:0007669"/>
    <property type="project" value="UniProtKB-UniRule"/>
</dbReference>
<dbReference type="GO" id="GO:0043565">
    <property type="term" value="F:sequence-specific DNA binding"/>
    <property type="evidence" value="ECO:0007669"/>
    <property type="project" value="InterPro"/>
</dbReference>
<dbReference type="FunFam" id="1.10.10.60:FF:000006">
    <property type="entry name" value="DNA-binding protein Fis"/>
    <property type="match status" value="1"/>
</dbReference>
<dbReference type="Gene3D" id="1.10.10.60">
    <property type="entry name" value="Homeodomain-like"/>
    <property type="match status" value="1"/>
</dbReference>
<dbReference type="HAMAP" id="MF_00166">
    <property type="entry name" value="DNA_binding_Fis"/>
    <property type="match status" value="1"/>
</dbReference>
<dbReference type="InterPro" id="IPR005412">
    <property type="entry name" value="Fis_DNA-bd"/>
</dbReference>
<dbReference type="InterPro" id="IPR009057">
    <property type="entry name" value="Homeodomain-like_sf"/>
</dbReference>
<dbReference type="InterPro" id="IPR002197">
    <property type="entry name" value="HTH_Fis"/>
</dbReference>
<dbReference type="InterPro" id="IPR050207">
    <property type="entry name" value="Trans_regulatory_Fis"/>
</dbReference>
<dbReference type="NCBIfam" id="NF001659">
    <property type="entry name" value="PRK00430.1"/>
    <property type="match status" value="1"/>
</dbReference>
<dbReference type="PANTHER" id="PTHR47918">
    <property type="entry name" value="DNA-BINDING PROTEIN FIS"/>
    <property type="match status" value="1"/>
</dbReference>
<dbReference type="PANTHER" id="PTHR47918:SF1">
    <property type="entry name" value="DNA-BINDING PROTEIN FIS"/>
    <property type="match status" value="1"/>
</dbReference>
<dbReference type="Pfam" id="PF02954">
    <property type="entry name" value="HTH_8"/>
    <property type="match status" value="1"/>
</dbReference>
<dbReference type="PIRSF" id="PIRSF002097">
    <property type="entry name" value="DNA-binding_Fis"/>
    <property type="match status" value="1"/>
</dbReference>
<dbReference type="PRINTS" id="PR01591">
    <property type="entry name" value="DNABINDNGFIS"/>
</dbReference>
<dbReference type="PRINTS" id="PR01590">
    <property type="entry name" value="HTHFIS"/>
</dbReference>
<dbReference type="SUPFAM" id="SSF46689">
    <property type="entry name" value="Homeodomain-like"/>
    <property type="match status" value="1"/>
</dbReference>
<proteinExistence type="inferred from homology"/>